<name>GNR1_SCHPO</name>
<organism>
    <name type="scientific">Schizosaccharomyces pombe (strain 972 / ATCC 24843)</name>
    <name type="common">Fission yeast</name>
    <dbReference type="NCBI Taxonomy" id="284812"/>
    <lineage>
        <taxon>Eukaryota</taxon>
        <taxon>Fungi</taxon>
        <taxon>Dikarya</taxon>
        <taxon>Ascomycota</taxon>
        <taxon>Taphrinomycotina</taxon>
        <taxon>Schizosaccharomycetes</taxon>
        <taxon>Schizosaccharomycetales</taxon>
        <taxon>Schizosaccharomycetaceae</taxon>
        <taxon>Schizosaccharomyces</taxon>
    </lineage>
</organism>
<feature type="chain" id="PRO_0000343431" description="Guanine nucleotide-binding protein negative regulator 1">
    <location>
        <begin position="1"/>
        <end position="399"/>
    </location>
</feature>
<feature type="repeat" description="WD 1">
    <location>
        <begin position="44"/>
        <end position="83"/>
    </location>
</feature>
<feature type="repeat" description="WD 2">
    <location>
        <begin position="105"/>
        <end position="145"/>
    </location>
</feature>
<feature type="repeat" description="WD 3">
    <location>
        <begin position="150"/>
        <end position="194"/>
    </location>
</feature>
<feature type="repeat" description="WD 4">
    <location>
        <begin position="207"/>
        <end position="247"/>
    </location>
</feature>
<feature type="repeat" description="WD 5">
    <location>
        <begin position="252"/>
        <end position="292"/>
    </location>
</feature>
<feature type="repeat" description="WD 6">
    <location>
        <begin position="296"/>
        <end position="337"/>
    </location>
</feature>
<keyword id="KW-0963">Cytoplasm</keyword>
<keyword id="KW-1185">Reference proteome</keyword>
<keyword id="KW-0677">Repeat</keyword>
<keyword id="KW-0853">WD repeat</keyword>
<proteinExistence type="evidence at protein level"/>
<evidence type="ECO:0000269" key="1">
    <source>
    </source>
</evidence>
<evidence type="ECO:0000269" key="2">
    <source>
    </source>
</evidence>
<accession>O59762</accession>
<sequence>MDNCVNSFEDQKDDLVHKKKSQNFGYVCGSINLGTNVIAQSPTKPLNFFHSSRWSPDGSTILSLTEDQCLNCWNVPFSDLSKKADGPLNFSKHLSYKYQSPETVYSYSWYSRMKLDDPSSNLFAVSSRDQPIKLINFTTGKNKASYHMIDHQERYQGSHCLQFTNDGEYLIAGDKNCLHHFNIRTGCKEPVMTTVTHGYKVPLWEFSLKGIQSCFSLNPMDSKTLAVGTYSNRVGIYNDCGRRPCQLEFSIERGNGVTHLQWCEDGEKLYVGSRCSDKIEVWDIRYVRDMVYALEGHRGDTNQRILFDTDKKDEILAGGTDGSIRRWRNKDLVEETHVTGNYDLTVNTVQANPINMQIKCVCYGNRIYKYEKDESEEEDESKEKDLWTGTVSALQVWMD</sequence>
<comment type="function">
    <text evidence="2">Negatively regulates the pheromone-response pathway. Acts as a structural mimic of the G protein beta subunit thereby interacting with gpa1 which then inhibits gpa1 signaling.</text>
</comment>
<comment type="subunit">
    <text evidence="2">Interacts with gpa1.</text>
</comment>
<comment type="subcellular location">
    <subcellularLocation>
        <location evidence="1">Cytoplasm</location>
    </subcellularLocation>
</comment>
<protein>
    <recommendedName>
        <fullName>Guanine nucleotide-binding protein negative regulator 1</fullName>
        <shortName>G protein negative regulator 1</shortName>
    </recommendedName>
    <alternativeName>
        <fullName>WD repeat-containing protein gnr1</fullName>
    </alternativeName>
</protein>
<dbReference type="EMBL" id="CU329672">
    <property type="protein sequence ID" value="CAA18997.1"/>
    <property type="molecule type" value="Genomic_DNA"/>
</dbReference>
<dbReference type="PIR" id="T40831">
    <property type="entry name" value="T40831"/>
</dbReference>
<dbReference type="RefSeq" id="NP_587950.1">
    <property type="nucleotide sequence ID" value="NM_001022941.2"/>
</dbReference>
<dbReference type="SMR" id="O59762"/>
<dbReference type="BioGRID" id="275871">
    <property type="interactions" value="26"/>
</dbReference>
<dbReference type="FunCoup" id="O59762">
    <property type="interactions" value="543"/>
</dbReference>
<dbReference type="STRING" id="284812.O59762"/>
<dbReference type="iPTMnet" id="O59762"/>
<dbReference type="PaxDb" id="4896-SPCC1020.09.1"/>
<dbReference type="EnsemblFungi" id="SPCC1020.09.1">
    <property type="protein sequence ID" value="SPCC1020.09.1:pep"/>
    <property type="gene ID" value="SPCC1020.09"/>
</dbReference>
<dbReference type="GeneID" id="2539303"/>
<dbReference type="KEGG" id="spo:2539303"/>
<dbReference type="PomBase" id="SPCC1020.09">
    <property type="gene designation" value="gnr1"/>
</dbReference>
<dbReference type="VEuPathDB" id="FungiDB:SPCC1020.09"/>
<dbReference type="eggNOG" id="KOG2919">
    <property type="taxonomic scope" value="Eukaryota"/>
</dbReference>
<dbReference type="HOGENOM" id="CLU_691098_0_0_1"/>
<dbReference type="InParanoid" id="O59762"/>
<dbReference type="OMA" id="IRTWILP"/>
<dbReference type="PhylomeDB" id="O59762"/>
<dbReference type="PRO" id="PR:O59762"/>
<dbReference type="Proteomes" id="UP000002485">
    <property type="component" value="Chromosome III"/>
</dbReference>
<dbReference type="GO" id="GO:0005829">
    <property type="term" value="C:cytosol"/>
    <property type="evidence" value="ECO:0007005"/>
    <property type="project" value="PomBase"/>
</dbReference>
<dbReference type="GO" id="GO:0140691">
    <property type="term" value="F:RNA folding chaperone"/>
    <property type="evidence" value="ECO:0000266"/>
    <property type="project" value="PomBase"/>
</dbReference>
<dbReference type="GO" id="GO:0007004">
    <property type="term" value="P:telomere maintenance via telomerase"/>
    <property type="evidence" value="ECO:0000266"/>
    <property type="project" value="PomBase"/>
</dbReference>
<dbReference type="FunFam" id="2.130.10.10:FF:002667">
    <property type="entry name" value="Guanine nucleotide-binding protein negative regulator 1"/>
    <property type="match status" value="1"/>
</dbReference>
<dbReference type="Gene3D" id="2.130.10.10">
    <property type="entry name" value="YVTN repeat-like/Quinoprotein amine dehydrogenase"/>
    <property type="match status" value="1"/>
</dbReference>
<dbReference type="InterPro" id="IPR051150">
    <property type="entry name" value="SWT21/TCAB1_mRNA_Telomere"/>
</dbReference>
<dbReference type="InterPro" id="IPR015943">
    <property type="entry name" value="WD40/YVTN_repeat-like_dom_sf"/>
</dbReference>
<dbReference type="InterPro" id="IPR036322">
    <property type="entry name" value="WD40_repeat_dom_sf"/>
</dbReference>
<dbReference type="InterPro" id="IPR001680">
    <property type="entry name" value="WD40_rpt"/>
</dbReference>
<dbReference type="PANTHER" id="PTHR13211">
    <property type="entry name" value="TELOMERASE CAJAL BODY PROTEIN 1"/>
    <property type="match status" value="1"/>
</dbReference>
<dbReference type="PANTHER" id="PTHR13211:SF0">
    <property type="entry name" value="TELOMERASE CAJAL BODY PROTEIN 1"/>
    <property type="match status" value="1"/>
</dbReference>
<dbReference type="SMART" id="SM00320">
    <property type="entry name" value="WD40"/>
    <property type="match status" value="6"/>
</dbReference>
<dbReference type="SUPFAM" id="SSF50978">
    <property type="entry name" value="WD40 repeat-like"/>
    <property type="match status" value="1"/>
</dbReference>
<reference key="1">
    <citation type="journal article" date="2002" name="Nature">
        <title>The genome sequence of Schizosaccharomyces pombe.</title>
        <authorList>
            <person name="Wood V."/>
            <person name="Gwilliam R."/>
            <person name="Rajandream M.A."/>
            <person name="Lyne M.H."/>
            <person name="Lyne R."/>
            <person name="Stewart A."/>
            <person name="Sgouros J.G."/>
            <person name="Peat N."/>
            <person name="Hayles J."/>
            <person name="Baker S.G."/>
            <person name="Basham D."/>
            <person name="Bowman S."/>
            <person name="Brooks K."/>
            <person name="Brown D."/>
            <person name="Brown S."/>
            <person name="Chillingworth T."/>
            <person name="Churcher C.M."/>
            <person name="Collins M."/>
            <person name="Connor R."/>
            <person name="Cronin A."/>
            <person name="Davis P."/>
            <person name="Feltwell T."/>
            <person name="Fraser A."/>
            <person name="Gentles S."/>
            <person name="Goble A."/>
            <person name="Hamlin N."/>
            <person name="Harris D.E."/>
            <person name="Hidalgo J."/>
            <person name="Hodgson G."/>
            <person name="Holroyd S."/>
            <person name="Hornsby T."/>
            <person name="Howarth S."/>
            <person name="Huckle E.J."/>
            <person name="Hunt S."/>
            <person name="Jagels K."/>
            <person name="James K.D."/>
            <person name="Jones L."/>
            <person name="Jones M."/>
            <person name="Leather S."/>
            <person name="McDonald S."/>
            <person name="McLean J."/>
            <person name="Mooney P."/>
            <person name="Moule S."/>
            <person name="Mungall K.L."/>
            <person name="Murphy L.D."/>
            <person name="Niblett D."/>
            <person name="Odell C."/>
            <person name="Oliver K."/>
            <person name="O'Neil S."/>
            <person name="Pearson D."/>
            <person name="Quail M.A."/>
            <person name="Rabbinowitsch E."/>
            <person name="Rutherford K.M."/>
            <person name="Rutter S."/>
            <person name="Saunders D."/>
            <person name="Seeger K."/>
            <person name="Sharp S."/>
            <person name="Skelton J."/>
            <person name="Simmonds M.N."/>
            <person name="Squares R."/>
            <person name="Squares S."/>
            <person name="Stevens K."/>
            <person name="Taylor K."/>
            <person name="Taylor R.G."/>
            <person name="Tivey A."/>
            <person name="Walsh S.V."/>
            <person name="Warren T."/>
            <person name="Whitehead S."/>
            <person name="Woodward J.R."/>
            <person name="Volckaert G."/>
            <person name="Aert R."/>
            <person name="Robben J."/>
            <person name="Grymonprez B."/>
            <person name="Weltjens I."/>
            <person name="Vanstreels E."/>
            <person name="Rieger M."/>
            <person name="Schaefer M."/>
            <person name="Mueller-Auer S."/>
            <person name="Gabel C."/>
            <person name="Fuchs M."/>
            <person name="Duesterhoeft A."/>
            <person name="Fritzc C."/>
            <person name="Holzer E."/>
            <person name="Moestl D."/>
            <person name="Hilbert H."/>
            <person name="Borzym K."/>
            <person name="Langer I."/>
            <person name="Beck A."/>
            <person name="Lehrach H."/>
            <person name="Reinhardt R."/>
            <person name="Pohl T.M."/>
            <person name="Eger P."/>
            <person name="Zimmermann W."/>
            <person name="Wedler H."/>
            <person name="Wambutt R."/>
            <person name="Purnelle B."/>
            <person name="Goffeau A."/>
            <person name="Cadieu E."/>
            <person name="Dreano S."/>
            <person name="Gloux S."/>
            <person name="Lelaure V."/>
            <person name="Mottier S."/>
            <person name="Galibert F."/>
            <person name="Aves S.J."/>
            <person name="Xiang Z."/>
            <person name="Hunt C."/>
            <person name="Moore K."/>
            <person name="Hurst S.M."/>
            <person name="Lucas M."/>
            <person name="Rochet M."/>
            <person name="Gaillardin C."/>
            <person name="Tallada V.A."/>
            <person name="Garzon A."/>
            <person name="Thode G."/>
            <person name="Daga R.R."/>
            <person name="Cruzado L."/>
            <person name="Jimenez J."/>
            <person name="Sanchez M."/>
            <person name="del Rey F."/>
            <person name="Benito J."/>
            <person name="Dominguez A."/>
            <person name="Revuelta J.L."/>
            <person name="Moreno S."/>
            <person name="Armstrong J."/>
            <person name="Forsburg S.L."/>
            <person name="Cerutti L."/>
            <person name="Lowe T."/>
            <person name="McCombie W.R."/>
            <person name="Paulsen I."/>
            <person name="Potashkin J."/>
            <person name="Shpakovski G.V."/>
            <person name="Ussery D."/>
            <person name="Barrell B.G."/>
            <person name="Nurse P."/>
        </authorList>
    </citation>
    <scope>NUCLEOTIDE SEQUENCE [LARGE SCALE GENOMIC DNA]</scope>
    <source>
        <strain>972 / ATCC 24843</strain>
    </source>
</reference>
<reference key="2">
    <citation type="journal article" date="2006" name="Fungal Genet. Biol.">
        <title>Identification of Gnr1p, a negative regulator of G alpha signalling in Schizosaccharomyces pombe, and its complementation by human G beta subunits.</title>
        <authorList>
            <person name="Goddard A."/>
            <person name="Ladds G."/>
            <person name="Forfar R."/>
            <person name="Davey J."/>
        </authorList>
    </citation>
    <scope>FUNCTION</scope>
    <scope>INTERACTION WITH GPA1</scope>
</reference>
<reference key="3">
    <citation type="journal article" date="2006" name="Nat. Biotechnol.">
        <title>ORFeome cloning and global analysis of protein localization in the fission yeast Schizosaccharomyces pombe.</title>
        <authorList>
            <person name="Matsuyama A."/>
            <person name="Arai R."/>
            <person name="Yashiroda Y."/>
            <person name="Shirai A."/>
            <person name="Kamata A."/>
            <person name="Sekido S."/>
            <person name="Kobayashi Y."/>
            <person name="Hashimoto A."/>
            <person name="Hamamoto M."/>
            <person name="Hiraoka Y."/>
            <person name="Horinouchi S."/>
            <person name="Yoshida M."/>
        </authorList>
    </citation>
    <scope>SUBCELLULAR LOCATION [LARGE SCALE ANALYSIS]</scope>
</reference>
<gene>
    <name type="primary">gnr1</name>
    <name type="ORF">SPCC1020.09</name>
</gene>